<accession>Q3T044</accession>
<proteinExistence type="evidence at transcript level"/>
<dbReference type="EC" id="1.-.-.-"/>
<dbReference type="EMBL" id="BC102569">
    <property type="protein sequence ID" value="AAI02570.1"/>
    <property type="molecule type" value="mRNA"/>
</dbReference>
<dbReference type="RefSeq" id="NP_001029497.1">
    <property type="nucleotide sequence ID" value="NM_001034325.2"/>
</dbReference>
<dbReference type="RefSeq" id="XP_015328462.1">
    <property type="nucleotide sequence ID" value="XM_015472976.1"/>
</dbReference>
<dbReference type="SMR" id="Q3T044"/>
<dbReference type="FunCoup" id="Q3T044">
    <property type="interactions" value="969"/>
</dbReference>
<dbReference type="STRING" id="9913.ENSBTAP00000015420"/>
<dbReference type="PaxDb" id="9913-ENSBTAP00000015420"/>
<dbReference type="GeneID" id="508617"/>
<dbReference type="KEGG" id="bta:508617"/>
<dbReference type="CTD" id="57179"/>
<dbReference type="VEuPathDB" id="HostDB:ENSBTAG00000011608"/>
<dbReference type="eggNOG" id="ENOG502QRB0">
    <property type="taxonomic scope" value="Eukaryota"/>
</dbReference>
<dbReference type="HOGENOM" id="CLU_079377_0_0_1"/>
<dbReference type="InParanoid" id="Q3T044"/>
<dbReference type="OMA" id="TIQAYKG"/>
<dbReference type="OrthoDB" id="8935954at2759"/>
<dbReference type="TreeFam" id="TF332226"/>
<dbReference type="Proteomes" id="UP000009136">
    <property type="component" value="Chromosome 10"/>
</dbReference>
<dbReference type="Bgee" id="ENSBTAG00000011608">
    <property type="expression patterns" value="Expressed in cortex of kidney and 106 other cell types or tissues"/>
</dbReference>
<dbReference type="GO" id="GO:0005737">
    <property type="term" value="C:cytoplasm"/>
    <property type="evidence" value="ECO:0000250"/>
    <property type="project" value="UniProtKB"/>
</dbReference>
<dbReference type="GO" id="GO:0016491">
    <property type="term" value="F:oxidoreductase activity"/>
    <property type="evidence" value="ECO:0007669"/>
    <property type="project" value="UniProtKB-KW"/>
</dbReference>
<dbReference type="InterPro" id="IPR026759">
    <property type="entry name" value="P33MONOX"/>
</dbReference>
<dbReference type="PANTHER" id="PTHR28342">
    <property type="entry name" value="MONOOXYGENASE P33MONOX-RELATED"/>
    <property type="match status" value="1"/>
</dbReference>
<dbReference type="PANTHER" id="PTHR28342:SF1">
    <property type="entry name" value="MONOOXYGENASE P33MONOX-RELATED"/>
    <property type="match status" value="1"/>
</dbReference>
<dbReference type="Pfam" id="PF15302">
    <property type="entry name" value="P33MONOX"/>
    <property type="match status" value="1"/>
</dbReference>
<comment type="function">
    <text evidence="1">Potential NADPH-dependent oxidoreductase. May be involved in the regulation of neuronal survival, differentiation and axonal outgrowth (By similarity).</text>
</comment>
<comment type="subunit">
    <text evidence="2">Interacts with NELFB, NOL12 and PRNP.</text>
</comment>
<comment type="subcellular location">
    <subcellularLocation>
        <location evidence="1">Cytoplasm</location>
    </subcellularLocation>
</comment>
<comment type="similarity">
    <text evidence="5">Belongs to the P33MONOX family.</text>
</comment>
<sequence>MASRQPEVPALEPSGPLGKMSLPIGMYRRAFSYDDALEDPTPMTPPPSDMGSIPWKPVIPERKYQDLAKVEEGEPSVSPPAPAPPPATDSAEKAPVVKAKATHVIMSSLITKQTQESIQRFEQQAGLRDAGYTPHKGLTTEETKYLRVAEALHKLKLQSGETAREERQPASTQSTPSSSPQASPKQKSRGWFTSGSATALPGPSLSTMDSGSGDKDRSSADKWSLFGPRSLQKSESGGFAIQAYKGAQKPSPMEVMRAQATRRAEEPATFKPPKMDIPVMEGTKQLPRAHSLKPRDLNVLTPTGF</sequence>
<feature type="chain" id="PRO_0000307729" description="Putative monooxygenase p33MONOX">
    <location>
        <begin position="1"/>
        <end position="305"/>
    </location>
</feature>
<feature type="region of interest" description="Disordered" evidence="4">
    <location>
        <begin position="1"/>
        <end position="20"/>
    </location>
</feature>
<feature type="region of interest" description="Disordered" evidence="4">
    <location>
        <begin position="36"/>
        <end position="96"/>
    </location>
</feature>
<feature type="region of interest" description="Disordered" evidence="4">
    <location>
        <begin position="156"/>
        <end position="278"/>
    </location>
</feature>
<feature type="short sequence motif" description="Flavin-containing monooxygenase motif">
    <location>
        <begin position="67"/>
        <end position="77"/>
    </location>
</feature>
<feature type="compositionally biased region" description="Basic and acidic residues" evidence="4">
    <location>
        <begin position="59"/>
        <end position="72"/>
    </location>
</feature>
<feature type="compositionally biased region" description="Pro residues" evidence="4">
    <location>
        <begin position="77"/>
        <end position="87"/>
    </location>
</feature>
<feature type="compositionally biased region" description="Low complexity" evidence="4">
    <location>
        <begin position="169"/>
        <end position="185"/>
    </location>
</feature>
<feature type="modified residue" description="Phosphothreonine" evidence="3">
    <location>
        <position position="44"/>
    </location>
</feature>
<feature type="modified residue" description="Phosphothreonine" evidence="3">
    <location>
        <position position="175"/>
    </location>
</feature>
<feature type="modified residue" description="Phosphoserine" evidence="2">
    <location>
        <position position="183"/>
    </location>
</feature>
<evidence type="ECO:0000250" key="1"/>
<evidence type="ECO:0000250" key="2">
    <source>
        <dbReference type="UniProtKB" id="Q96A73"/>
    </source>
</evidence>
<evidence type="ECO:0000250" key="3">
    <source>
        <dbReference type="UniProtKB" id="Q9DBN4"/>
    </source>
</evidence>
<evidence type="ECO:0000256" key="4">
    <source>
        <dbReference type="SAM" id="MobiDB-lite"/>
    </source>
</evidence>
<evidence type="ECO:0000305" key="5"/>
<gene>
    <name type="primary">P33MONOX</name>
</gene>
<keyword id="KW-0963">Cytoplasm</keyword>
<keyword id="KW-0521">NADP</keyword>
<keyword id="KW-0560">Oxidoreductase</keyword>
<keyword id="KW-0597">Phosphoprotein</keyword>
<keyword id="KW-1185">Reference proteome</keyword>
<name>P33MX_BOVIN</name>
<organism>
    <name type="scientific">Bos taurus</name>
    <name type="common">Bovine</name>
    <dbReference type="NCBI Taxonomy" id="9913"/>
    <lineage>
        <taxon>Eukaryota</taxon>
        <taxon>Metazoa</taxon>
        <taxon>Chordata</taxon>
        <taxon>Craniata</taxon>
        <taxon>Vertebrata</taxon>
        <taxon>Euteleostomi</taxon>
        <taxon>Mammalia</taxon>
        <taxon>Eutheria</taxon>
        <taxon>Laurasiatheria</taxon>
        <taxon>Artiodactyla</taxon>
        <taxon>Ruminantia</taxon>
        <taxon>Pecora</taxon>
        <taxon>Bovidae</taxon>
        <taxon>Bovinae</taxon>
        <taxon>Bos</taxon>
    </lineage>
</organism>
<protein>
    <recommendedName>
        <fullName>Putative monooxygenase p33MONOX</fullName>
        <ecNumber>1.-.-.-</ecNumber>
    </recommendedName>
</protein>
<reference key="1">
    <citation type="submission" date="2005-08" db="EMBL/GenBank/DDBJ databases">
        <authorList>
            <consortium name="NIH - Mammalian Gene Collection (MGC) project"/>
        </authorList>
    </citation>
    <scope>NUCLEOTIDE SEQUENCE [LARGE SCALE MRNA]</scope>
    <source>
        <strain>Hereford</strain>
        <tissue>Testis</tissue>
    </source>
</reference>